<dbReference type="EC" id="2.7.4.6" evidence="1"/>
<dbReference type="EMBL" id="CP000348">
    <property type="protein sequence ID" value="ABJ77797.1"/>
    <property type="molecule type" value="Genomic_DNA"/>
</dbReference>
<dbReference type="RefSeq" id="WP_002724748.1">
    <property type="nucleotide sequence ID" value="NC_008508.1"/>
</dbReference>
<dbReference type="SMR" id="Q056E8"/>
<dbReference type="KEGG" id="lbl:LBL_0180"/>
<dbReference type="HOGENOM" id="CLU_060216_6_3_12"/>
<dbReference type="GO" id="GO:0005737">
    <property type="term" value="C:cytoplasm"/>
    <property type="evidence" value="ECO:0007669"/>
    <property type="project" value="UniProtKB-SubCell"/>
</dbReference>
<dbReference type="GO" id="GO:0005524">
    <property type="term" value="F:ATP binding"/>
    <property type="evidence" value="ECO:0007669"/>
    <property type="project" value="UniProtKB-UniRule"/>
</dbReference>
<dbReference type="GO" id="GO:0046872">
    <property type="term" value="F:metal ion binding"/>
    <property type="evidence" value="ECO:0007669"/>
    <property type="project" value="UniProtKB-KW"/>
</dbReference>
<dbReference type="GO" id="GO:0004550">
    <property type="term" value="F:nucleoside diphosphate kinase activity"/>
    <property type="evidence" value="ECO:0007669"/>
    <property type="project" value="UniProtKB-UniRule"/>
</dbReference>
<dbReference type="GO" id="GO:0006241">
    <property type="term" value="P:CTP biosynthetic process"/>
    <property type="evidence" value="ECO:0007669"/>
    <property type="project" value="UniProtKB-UniRule"/>
</dbReference>
<dbReference type="GO" id="GO:0006183">
    <property type="term" value="P:GTP biosynthetic process"/>
    <property type="evidence" value="ECO:0007669"/>
    <property type="project" value="UniProtKB-UniRule"/>
</dbReference>
<dbReference type="GO" id="GO:0006228">
    <property type="term" value="P:UTP biosynthetic process"/>
    <property type="evidence" value="ECO:0007669"/>
    <property type="project" value="UniProtKB-UniRule"/>
</dbReference>
<dbReference type="CDD" id="cd04413">
    <property type="entry name" value="NDPk_I"/>
    <property type="match status" value="1"/>
</dbReference>
<dbReference type="FunFam" id="3.30.70.141:FF:000009">
    <property type="entry name" value="Nucleoside diphosphate kinase"/>
    <property type="match status" value="1"/>
</dbReference>
<dbReference type="Gene3D" id="3.30.70.141">
    <property type="entry name" value="Nucleoside diphosphate kinase-like domain"/>
    <property type="match status" value="1"/>
</dbReference>
<dbReference type="HAMAP" id="MF_00451">
    <property type="entry name" value="NDP_kinase"/>
    <property type="match status" value="1"/>
</dbReference>
<dbReference type="InterPro" id="IPR034907">
    <property type="entry name" value="NDK-like_dom"/>
</dbReference>
<dbReference type="InterPro" id="IPR036850">
    <property type="entry name" value="NDK-like_dom_sf"/>
</dbReference>
<dbReference type="InterPro" id="IPR001564">
    <property type="entry name" value="Nucleoside_diP_kinase"/>
</dbReference>
<dbReference type="NCBIfam" id="NF001908">
    <property type="entry name" value="PRK00668.1"/>
    <property type="match status" value="1"/>
</dbReference>
<dbReference type="NCBIfam" id="NF011114">
    <property type="entry name" value="PRK14542.1"/>
    <property type="match status" value="1"/>
</dbReference>
<dbReference type="PANTHER" id="PTHR46161">
    <property type="entry name" value="NUCLEOSIDE DIPHOSPHATE KINASE"/>
    <property type="match status" value="1"/>
</dbReference>
<dbReference type="PANTHER" id="PTHR46161:SF3">
    <property type="entry name" value="NUCLEOSIDE DIPHOSPHATE KINASE DDB_G0292928-RELATED"/>
    <property type="match status" value="1"/>
</dbReference>
<dbReference type="Pfam" id="PF00334">
    <property type="entry name" value="NDK"/>
    <property type="match status" value="1"/>
</dbReference>
<dbReference type="PRINTS" id="PR01243">
    <property type="entry name" value="NUCDPKINASE"/>
</dbReference>
<dbReference type="SMART" id="SM00562">
    <property type="entry name" value="NDK"/>
    <property type="match status" value="1"/>
</dbReference>
<dbReference type="SUPFAM" id="SSF54919">
    <property type="entry name" value="Nucleoside diphosphate kinase, NDK"/>
    <property type="match status" value="1"/>
</dbReference>
<dbReference type="PROSITE" id="PS51374">
    <property type="entry name" value="NDPK_LIKE"/>
    <property type="match status" value="1"/>
</dbReference>
<reference key="1">
    <citation type="journal article" date="2006" name="Proc. Natl. Acad. Sci. U.S.A.">
        <title>Genome reduction in Leptospira borgpetersenii reflects limited transmission potential.</title>
        <authorList>
            <person name="Bulach D.M."/>
            <person name="Zuerner R.L."/>
            <person name="Wilson P."/>
            <person name="Seemann T."/>
            <person name="McGrath A."/>
            <person name="Cullen P.A."/>
            <person name="Davis J."/>
            <person name="Johnson M."/>
            <person name="Kuczek E."/>
            <person name="Alt D.P."/>
            <person name="Peterson-Burch B."/>
            <person name="Coppel R.L."/>
            <person name="Rood J.I."/>
            <person name="Davies J.K."/>
            <person name="Adler B."/>
        </authorList>
    </citation>
    <scope>NUCLEOTIDE SEQUENCE [LARGE SCALE GENOMIC DNA]</scope>
    <source>
        <strain>L550</strain>
    </source>
</reference>
<accession>Q056E8</accession>
<keyword id="KW-0067">ATP-binding</keyword>
<keyword id="KW-0963">Cytoplasm</keyword>
<keyword id="KW-0418">Kinase</keyword>
<keyword id="KW-0460">Magnesium</keyword>
<keyword id="KW-0479">Metal-binding</keyword>
<keyword id="KW-0546">Nucleotide metabolism</keyword>
<keyword id="KW-0547">Nucleotide-binding</keyword>
<keyword id="KW-0597">Phosphoprotein</keyword>
<keyword id="KW-0808">Transferase</keyword>
<sequence>MSKTFIMIKPDGVKNKHVGNILARIEKEGFKILGLKYLKLSLEDAKQFYKVHSARPFYSDLCNYMSSGPIVAAALERDNAVLHWREVIGATDPKEAAAGTIRALYAESKEANAVHGSDSDENAALEVSFFFKGNELF</sequence>
<feature type="chain" id="PRO_1000026246" description="Nucleoside diphosphate kinase">
    <location>
        <begin position="1"/>
        <end position="137"/>
    </location>
</feature>
<feature type="active site" description="Pros-phosphohistidine intermediate" evidence="1">
    <location>
        <position position="115"/>
    </location>
</feature>
<feature type="binding site" evidence="1">
    <location>
        <position position="9"/>
    </location>
    <ligand>
        <name>ATP</name>
        <dbReference type="ChEBI" id="CHEBI:30616"/>
    </ligand>
</feature>
<feature type="binding site" evidence="1">
    <location>
        <position position="57"/>
    </location>
    <ligand>
        <name>ATP</name>
        <dbReference type="ChEBI" id="CHEBI:30616"/>
    </ligand>
</feature>
<feature type="binding site" evidence="1">
    <location>
        <position position="85"/>
    </location>
    <ligand>
        <name>ATP</name>
        <dbReference type="ChEBI" id="CHEBI:30616"/>
    </ligand>
</feature>
<feature type="binding site" evidence="1">
    <location>
        <position position="91"/>
    </location>
    <ligand>
        <name>ATP</name>
        <dbReference type="ChEBI" id="CHEBI:30616"/>
    </ligand>
</feature>
<feature type="binding site" evidence="1">
    <location>
        <position position="102"/>
    </location>
    <ligand>
        <name>ATP</name>
        <dbReference type="ChEBI" id="CHEBI:30616"/>
    </ligand>
</feature>
<feature type="binding site" evidence="1">
    <location>
        <position position="112"/>
    </location>
    <ligand>
        <name>ATP</name>
        <dbReference type="ChEBI" id="CHEBI:30616"/>
    </ligand>
</feature>
<organism>
    <name type="scientific">Leptospira borgpetersenii serovar Hardjo-bovis (strain L550)</name>
    <dbReference type="NCBI Taxonomy" id="355276"/>
    <lineage>
        <taxon>Bacteria</taxon>
        <taxon>Pseudomonadati</taxon>
        <taxon>Spirochaetota</taxon>
        <taxon>Spirochaetia</taxon>
        <taxon>Leptospirales</taxon>
        <taxon>Leptospiraceae</taxon>
        <taxon>Leptospira</taxon>
    </lineage>
</organism>
<comment type="function">
    <text evidence="1">Major role in the synthesis of nucleoside triphosphates other than ATP. The ATP gamma phosphate is transferred to the NDP beta phosphate via a ping-pong mechanism, using a phosphorylated active-site intermediate.</text>
</comment>
<comment type="catalytic activity">
    <reaction evidence="1">
        <text>a 2'-deoxyribonucleoside 5'-diphosphate + ATP = a 2'-deoxyribonucleoside 5'-triphosphate + ADP</text>
        <dbReference type="Rhea" id="RHEA:44640"/>
        <dbReference type="ChEBI" id="CHEBI:30616"/>
        <dbReference type="ChEBI" id="CHEBI:61560"/>
        <dbReference type="ChEBI" id="CHEBI:73316"/>
        <dbReference type="ChEBI" id="CHEBI:456216"/>
        <dbReference type="EC" id="2.7.4.6"/>
    </reaction>
</comment>
<comment type="catalytic activity">
    <reaction evidence="1">
        <text>a ribonucleoside 5'-diphosphate + ATP = a ribonucleoside 5'-triphosphate + ADP</text>
        <dbReference type="Rhea" id="RHEA:18113"/>
        <dbReference type="ChEBI" id="CHEBI:30616"/>
        <dbReference type="ChEBI" id="CHEBI:57930"/>
        <dbReference type="ChEBI" id="CHEBI:61557"/>
        <dbReference type="ChEBI" id="CHEBI:456216"/>
        <dbReference type="EC" id="2.7.4.6"/>
    </reaction>
</comment>
<comment type="cofactor">
    <cofactor evidence="1">
        <name>Mg(2+)</name>
        <dbReference type="ChEBI" id="CHEBI:18420"/>
    </cofactor>
</comment>
<comment type="subunit">
    <text evidence="1">Homotetramer.</text>
</comment>
<comment type="subcellular location">
    <subcellularLocation>
        <location evidence="1">Cytoplasm</location>
    </subcellularLocation>
</comment>
<comment type="similarity">
    <text evidence="1">Belongs to the NDK family.</text>
</comment>
<evidence type="ECO:0000255" key="1">
    <source>
        <dbReference type="HAMAP-Rule" id="MF_00451"/>
    </source>
</evidence>
<gene>
    <name evidence="1" type="primary">ndk</name>
    <name type="ordered locus">LBL_0180</name>
</gene>
<name>NDK_LEPBL</name>
<protein>
    <recommendedName>
        <fullName evidence="1">Nucleoside diphosphate kinase</fullName>
        <shortName evidence="1">NDK</shortName>
        <shortName evidence="1">NDP kinase</shortName>
        <ecNumber evidence="1">2.7.4.6</ecNumber>
    </recommendedName>
    <alternativeName>
        <fullName evidence="1">Nucleoside-2-P kinase</fullName>
    </alternativeName>
</protein>
<proteinExistence type="inferred from homology"/>